<comment type="function">
    <text evidence="4 5">Plays a major role as delta(8)-fatty-acid desaturase which introduces a double bond at the 8-position in the long-chain base (LCB) of ceramides with or without a hydroxy group at the 4-position. The enzyme produces both the 8E and 8Z isomers. This structural modification contributes to the quantitative partitioning of ceramides between the two major sphingolipid classes, glucosylceramides and glycosylinositolphosphoryl ceramides. Sphingolipids are important membrane components involved in environmental stress responses, such as resistance to chilling, and act as cell signaling molecules.</text>
</comment>
<comment type="catalytic activity">
    <reaction evidence="4 5 6">
        <text>an N-acyl-(4R)-4-hydroxysphinganine + 2 Fe(II)-[cytochrome b5] + O2 + 2 H(+) = a (4R,8E)-4-hydroxysphingenine ceramide + 2 Fe(III)-[cytochrome b5] + 2 H2O</text>
        <dbReference type="Rhea" id="RHEA:46268"/>
        <dbReference type="Rhea" id="RHEA-COMP:10438"/>
        <dbReference type="Rhea" id="RHEA-COMP:10439"/>
        <dbReference type="ChEBI" id="CHEBI:15377"/>
        <dbReference type="ChEBI" id="CHEBI:15378"/>
        <dbReference type="ChEBI" id="CHEBI:15379"/>
        <dbReference type="ChEBI" id="CHEBI:29033"/>
        <dbReference type="ChEBI" id="CHEBI:29034"/>
        <dbReference type="ChEBI" id="CHEBI:31998"/>
        <dbReference type="ChEBI" id="CHEBI:50934"/>
        <dbReference type="EC" id="1.14.19.29"/>
    </reaction>
</comment>
<comment type="catalytic activity">
    <reaction evidence="4 5 6">
        <text>an N-acyl-(4R)-4-hydroxysphinganine + 2 Fe(II)-[cytochrome b5] + O2 + 2 H(+) = a (4R,8Z)-4-hydroxysphing-8-enine ceramide + 2 Fe(III)-[cytochrome b5] + 2 H2O</text>
        <dbReference type="Rhea" id="RHEA:46272"/>
        <dbReference type="Rhea" id="RHEA-COMP:10438"/>
        <dbReference type="Rhea" id="RHEA-COMP:10439"/>
        <dbReference type="ChEBI" id="CHEBI:15377"/>
        <dbReference type="ChEBI" id="CHEBI:15378"/>
        <dbReference type="ChEBI" id="CHEBI:15379"/>
        <dbReference type="ChEBI" id="CHEBI:29033"/>
        <dbReference type="ChEBI" id="CHEBI:29034"/>
        <dbReference type="ChEBI" id="CHEBI:31998"/>
        <dbReference type="ChEBI" id="CHEBI:85951"/>
        <dbReference type="EC" id="1.14.19.29"/>
    </reaction>
</comment>
<comment type="cofactor">
    <cofactor evidence="1">
        <name>Fe cation</name>
        <dbReference type="ChEBI" id="CHEBI:24875"/>
    </cofactor>
</comment>
<comment type="subcellular location">
    <subcellularLocation>
        <location evidence="7">Membrane</location>
        <topology evidence="7">Multi-pass membrane protein</topology>
    </subcellularLocation>
</comment>
<comment type="domain">
    <text evidence="1">The histidine box domains may contain the active site and/or be involved in metal ion binding.</text>
</comment>
<comment type="similarity">
    <text evidence="7">Belongs to the fatty acid desaturase type 1 family.</text>
</comment>
<name>SLD1_HELAN</name>
<reference key="1">
    <citation type="journal article" date="1995" name="Eur. J. Biochem.">
        <title>A cytochrome-b5-containing fusion protein similar to plant acyl lipid desaturases.</title>
        <authorList>
            <person name="Sperling P."/>
            <person name="Schmidt H."/>
            <person name="Heinz E."/>
        </authorList>
    </citation>
    <scope>NUCLEOTIDE SEQUENCE [MRNA]</scope>
</reference>
<reference key="2">
    <citation type="journal article" date="2000" name="Biochem. Soc. Trans.">
        <title>Further characterization of Delta(8)-sphingolipid desaturases from higher plants.</title>
        <authorList>
            <person name="Sperling P."/>
            <person name="Blume A."/>
            <person name="Zahringer U."/>
            <person name="Heinz E."/>
        </authorList>
    </citation>
    <scope>CATALYTIC ACTIVITY</scope>
    <scope>FUNCTION</scope>
    <scope>REACTION MECHANISM</scope>
</reference>
<reference key="3">
    <citation type="journal article" date="2002" name="Angew. Chem. Int. Ed.">
        <title>Characterization of a Delta8-sphingolipid desaturase from higher plants: a stereochemical and mechanistic study on the origin of E,Z isomers.</title>
        <authorList>
            <person name="Beckmann C."/>
            <person name="Rattke J."/>
            <person name="Oldham N.J."/>
            <person name="Sperling P."/>
            <person name="Heinz E."/>
            <person name="Boland W."/>
        </authorList>
    </citation>
    <scope>CATALYTIC ACTIVITY</scope>
    <scope>FUNCTION</scope>
</reference>
<reference key="4">
    <citation type="journal article" date="2010" name="J. Org. Chem.">
        <title>Conformational studies on the Delta8(E,Z)-sphingolipid desaturase from Helianthus annuus with chiral fluoropalmitic acids as mechanistic probes.</title>
        <authorList>
            <person name="Habel A."/>
            <person name="Sperling P."/>
            <person name="Bartram S."/>
            <person name="Heinz E."/>
            <person name="Boland W."/>
        </authorList>
    </citation>
    <scope>CATALYTIC ACTIVITY</scope>
</reference>
<gene>
    <name type="primary">sld1</name>
</gene>
<protein>
    <recommendedName>
        <fullName>Delta(8)-fatty-acid desaturase</fullName>
        <ecNumber evidence="4 5 6">1.14.19.29</ecNumber>
    </recommendedName>
    <alternativeName>
        <fullName>Delta(8)-sphingolipid desaturase</fullName>
    </alternativeName>
    <alternativeName>
        <fullName>Sphingolipid 8-(E/Z)-desaturase</fullName>
    </alternativeName>
</protein>
<keyword id="KW-0249">Electron transport</keyword>
<keyword id="KW-0349">Heme</keyword>
<keyword id="KW-0408">Iron</keyword>
<keyword id="KW-0443">Lipid metabolism</keyword>
<keyword id="KW-0472">Membrane</keyword>
<keyword id="KW-0479">Metal-binding</keyword>
<keyword id="KW-0560">Oxidoreductase</keyword>
<keyword id="KW-0746">Sphingolipid metabolism</keyword>
<keyword id="KW-0812">Transmembrane</keyword>
<keyword id="KW-1133">Transmembrane helix</keyword>
<keyword id="KW-0813">Transport</keyword>
<sequence length="458" mass="52231">MVSPSIEVLNSIADGKKYITSKELKKHNNPNDLWISILGKVYNVTEWAKEHPGGDAPLINLAGQDVTDAFIAFHPGTAWKHLDKLFTGYHLKDYQVSDISRDYRKLASEFAKAGMFEKKGHGVIYSLCFVSLLLSACVYGVLYSGSFWIHMLSGAILGLAWMQIAYLGHDAGHYQMMATRGWNKFAGIFIGNCITGISIAWWKWTHNAHHIACNSLDYDPDLQHLPMLAVSSKLFNSITSVFYGRQLTFDPLARFFVSYQHYLYYPIMCVARVNLYLQTILLLISKRKIPDRGLNILGTLIFWTWFPLLVSRLPNWPERVAFVLVSFCVTGIQHIQFTLNHFSGDVYVGPPKGDNWFEKQTRGTIDIACSSWMDWFFGGLQFQLEHHLFPRLPRCHLRSISPICRELCKKYNLPYVSLSFYDANVTTLKTLRTAALQARDLTNPAPQNLAWEAFNTHG</sequence>
<accession>Q43469</accession>
<feature type="chain" id="PRO_0000418893" description="Delta(8)-fatty-acid desaturase">
    <location>
        <begin position="1"/>
        <end position="458"/>
    </location>
</feature>
<feature type="transmembrane region" description="Helical" evidence="2">
    <location>
        <begin position="122"/>
        <end position="142"/>
    </location>
</feature>
<feature type="transmembrane region" description="Helical" evidence="2">
    <location>
        <begin position="147"/>
        <end position="167"/>
    </location>
</feature>
<feature type="transmembrane region" description="Helical" evidence="2">
    <location>
        <begin position="185"/>
        <end position="205"/>
    </location>
</feature>
<feature type="transmembrane region" description="Helical" evidence="2">
    <location>
        <begin position="264"/>
        <end position="284"/>
    </location>
</feature>
<feature type="transmembrane region" description="Helical" evidence="2">
    <location>
        <begin position="293"/>
        <end position="313"/>
    </location>
</feature>
<feature type="transmembrane region" description="Helical" evidence="2">
    <location>
        <begin position="320"/>
        <end position="340"/>
    </location>
</feature>
<feature type="domain" description="Cytochrome b5 heme-binding" evidence="3">
    <location>
        <begin position="16"/>
        <end position="100"/>
    </location>
</feature>
<feature type="short sequence motif" description="Histidine box-1" evidence="7">
    <location>
        <begin position="169"/>
        <end position="173"/>
    </location>
</feature>
<feature type="short sequence motif" description="Histidine box-2" evidence="7">
    <location>
        <begin position="206"/>
        <end position="210"/>
    </location>
</feature>
<feature type="short sequence motif" description="Histidine box-3" evidence="7">
    <location>
        <begin position="383"/>
        <end position="387"/>
    </location>
</feature>
<feature type="binding site" description="axial binding residue" evidence="3">
    <location>
        <position position="51"/>
    </location>
    <ligand>
        <name>heme</name>
        <dbReference type="ChEBI" id="CHEBI:30413"/>
    </ligand>
    <ligandPart>
        <name>Fe</name>
        <dbReference type="ChEBI" id="CHEBI:18248"/>
    </ligandPart>
</feature>
<feature type="binding site" description="axial binding residue" evidence="3">
    <location>
        <position position="74"/>
    </location>
    <ligand>
        <name>heme</name>
        <dbReference type="ChEBI" id="CHEBI:30413"/>
    </ligand>
    <ligandPart>
        <name>Fe</name>
        <dbReference type="ChEBI" id="CHEBI:18248"/>
    </ligandPart>
</feature>
<proteinExistence type="evidence at protein level"/>
<dbReference type="EC" id="1.14.19.29" evidence="4 5 6"/>
<dbReference type="EMBL" id="X87143">
    <property type="protein sequence ID" value="CAA60621.1"/>
    <property type="molecule type" value="mRNA"/>
</dbReference>
<dbReference type="PIR" id="S68358">
    <property type="entry name" value="S68358"/>
</dbReference>
<dbReference type="SMR" id="Q43469"/>
<dbReference type="OMA" id="SFMAFYW"/>
<dbReference type="OrthoDB" id="260091at2759"/>
<dbReference type="PhylomeDB" id="Q43469"/>
<dbReference type="BRENDA" id="1.14.19.29">
    <property type="organism ID" value="2597"/>
</dbReference>
<dbReference type="GO" id="GO:0016020">
    <property type="term" value="C:membrane"/>
    <property type="evidence" value="ECO:0007669"/>
    <property type="project" value="UniProtKB-SubCell"/>
</dbReference>
<dbReference type="GO" id="GO:0046872">
    <property type="term" value="F:metal ion binding"/>
    <property type="evidence" value="ECO:0007669"/>
    <property type="project" value="UniProtKB-KW"/>
</dbReference>
<dbReference type="GO" id="GO:0052631">
    <property type="term" value="F:sphingolipid 8-(E/Z)-desaturase activity"/>
    <property type="evidence" value="ECO:0007669"/>
    <property type="project" value="UniProtKB-EC"/>
</dbReference>
<dbReference type="GO" id="GO:0006665">
    <property type="term" value="P:sphingolipid metabolic process"/>
    <property type="evidence" value="ECO:0007669"/>
    <property type="project" value="UniProtKB-KW"/>
</dbReference>
<dbReference type="CDD" id="cd03506">
    <property type="entry name" value="Delta6-FADS-like"/>
    <property type="match status" value="1"/>
</dbReference>
<dbReference type="Gene3D" id="3.10.120.10">
    <property type="entry name" value="Cytochrome b5-like heme/steroid binding domain"/>
    <property type="match status" value="1"/>
</dbReference>
<dbReference type="InterPro" id="IPR001199">
    <property type="entry name" value="Cyt_B5-like_heme/steroid-bd"/>
</dbReference>
<dbReference type="InterPro" id="IPR036400">
    <property type="entry name" value="Cyt_B5-like_heme/steroid_sf"/>
</dbReference>
<dbReference type="InterPro" id="IPR005804">
    <property type="entry name" value="FA_desaturase_dom"/>
</dbReference>
<dbReference type="InterPro" id="IPR012171">
    <property type="entry name" value="Fatty_acid_desaturase"/>
</dbReference>
<dbReference type="PANTHER" id="PTHR19353:SF28">
    <property type="entry name" value="DELTA(8)-FATTY-ACID DESATURASE 2"/>
    <property type="match status" value="1"/>
</dbReference>
<dbReference type="PANTHER" id="PTHR19353">
    <property type="entry name" value="FATTY ACID DESATURASE 2"/>
    <property type="match status" value="1"/>
</dbReference>
<dbReference type="Pfam" id="PF00173">
    <property type="entry name" value="Cyt-b5"/>
    <property type="match status" value="1"/>
</dbReference>
<dbReference type="Pfam" id="PF00487">
    <property type="entry name" value="FA_desaturase"/>
    <property type="match status" value="1"/>
</dbReference>
<dbReference type="PIRSF" id="PIRSF015921">
    <property type="entry name" value="FA_sphinglp_des"/>
    <property type="match status" value="1"/>
</dbReference>
<dbReference type="SMART" id="SM01117">
    <property type="entry name" value="Cyt-b5"/>
    <property type="match status" value="1"/>
</dbReference>
<dbReference type="SUPFAM" id="SSF55856">
    <property type="entry name" value="Cytochrome b5-like heme/steroid binding domain"/>
    <property type="match status" value="1"/>
</dbReference>
<dbReference type="PROSITE" id="PS50255">
    <property type="entry name" value="CYTOCHROME_B5_2"/>
    <property type="match status" value="1"/>
</dbReference>
<organism>
    <name type="scientific">Helianthus annuus</name>
    <name type="common">Common sunflower</name>
    <dbReference type="NCBI Taxonomy" id="4232"/>
    <lineage>
        <taxon>Eukaryota</taxon>
        <taxon>Viridiplantae</taxon>
        <taxon>Streptophyta</taxon>
        <taxon>Embryophyta</taxon>
        <taxon>Tracheophyta</taxon>
        <taxon>Spermatophyta</taxon>
        <taxon>Magnoliopsida</taxon>
        <taxon>eudicotyledons</taxon>
        <taxon>Gunneridae</taxon>
        <taxon>Pentapetalae</taxon>
        <taxon>asterids</taxon>
        <taxon>campanulids</taxon>
        <taxon>Asterales</taxon>
        <taxon>Asteraceae</taxon>
        <taxon>Asteroideae</taxon>
        <taxon>Heliantheae alliance</taxon>
        <taxon>Heliantheae</taxon>
        <taxon>Helianthus</taxon>
    </lineage>
</organism>
<evidence type="ECO:0000250" key="1"/>
<evidence type="ECO:0000255" key="2"/>
<evidence type="ECO:0000255" key="3">
    <source>
        <dbReference type="PROSITE-ProRule" id="PRU00279"/>
    </source>
</evidence>
<evidence type="ECO:0000269" key="4">
    <source>
    </source>
</evidence>
<evidence type="ECO:0000269" key="5">
    <source>
    </source>
</evidence>
<evidence type="ECO:0000269" key="6">
    <source>
    </source>
</evidence>
<evidence type="ECO:0000305" key="7"/>